<comment type="function">
    <text>This vanadium-iron protein is part of the nitrogenase complex that catalyzes the key enzymatic reactions in nitrogen fixation.</text>
</comment>
<comment type="catalytic activity">
    <reaction>
        <text>N2 + 8 reduced [2Fe-2S]-[ferredoxin] + 16 ATP + 16 H2O = H2 + 8 oxidized [2Fe-2S]-[ferredoxin] + 2 NH4(+) + 16 ADP + 16 phosphate + 6 H(+)</text>
        <dbReference type="Rhea" id="RHEA:21448"/>
        <dbReference type="Rhea" id="RHEA-COMP:10000"/>
        <dbReference type="Rhea" id="RHEA-COMP:10001"/>
        <dbReference type="ChEBI" id="CHEBI:15377"/>
        <dbReference type="ChEBI" id="CHEBI:15378"/>
        <dbReference type="ChEBI" id="CHEBI:17997"/>
        <dbReference type="ChEBI" id="CHEBI:18276"/>
        <dbReference type="ChEBI" id="CHEBI:28938"/>
        <dbReference type="ChEBI" id="CHEBI:30616"/>
        <dbReference type="ChEBI" id="CHEBI:33737"/>
        <dbReference type="ChEBI" id="CHEBI:33738"/>
        <dbReference type="ChEBI" id="CHEBI:43474"/>
        <dbReference type="ChEBI" id="CHEBI:456216"/>
        <dbReference type="EC" id="1.18.6.1"/>
    </reaction>
</comment>
<comment type="cofactor">
    <cofactor evidence="1">
        <name>[8Fe-7S] cluster</name>
        <dbReference type="ChEBI" id="CHEBI:21143"/>
    </cofactor>
    <text evidence="1">Binds 1 [8Fe-7S] cluster per heterodimer.</text>
</comment>
<comment type="cofactor">
    <cofactor evidence="1">
        <name>[7Fe-V-9S-C-homocitryl] cluster</name>
        <dbReference type="ChEBI" id="CHEBI:60357"/>
    </cofactor>
    <text evidence="1">Binds 1 [7Fe-V-9S-C-homocitryl] cluster per subunit.</text>
</comment>
<comment type="subunit">
    <text evidence="1">Hexamer of two alpha, two beta, and two delta chains.</text>
</comment>
<comment type="miscellaneous">
    <text>The structure of the 7Fe-V-9S-C-homocitryl cluster is assumed to be analogous to the 7Fe-Mo-9S-C-homocitryl cluster.</text>
</comment>
<comment type="similarity">
    <text evidence="2">Belongs to the NifD/NifK/NifE/NifN family.</text>
</comment>
<sequence>GGVLKDTIQMIHGPLGCAYDTWHTKRYPTDNGHFNMKYVWSTDMKESHVVFGGEKRLEKSMHEAFDEMPDIKRMIVYTTCPTALIGDDIKAVAKKVMKDRPDVDVFTVECPGFSGVSQSKGHHVLNIGWINEKVETMEKEITSEYTMNFIGDFNIQGDTQLLQTYWDRLGIQVVAHFTGNGTYDDLRCMHQAQLNVVNCARSSGYIANELKKRYGIPRLDIDSWGFNYMAEGIRKICAFFGIEEKGEELIAEEYAKWKPKLDWYK</sequence>
<dbReference type="EC" id="1.18.6.1"/>
<dbReference type="EMBL" id="AF058783">
    <property type="protein sequence ID" value="AAC14340.1"/>
    <property type="molecule type" value="Genomic_DNA"/>
</dbReference>
<dbReference type="SMR" id="O68953"/>
<dbReference type="GO" id="GO:0005524">
    <property type="term" value="F:ATP binding"/>
    <property type="evidence" value="ECO:0007669"/>
    <property type="project" value="UniProtKB-KW"/>
</dbReference>
<dbReference type="GO" id="GO:0051536">
    <property type="term" value="F:iron-sulfur cluster binding"/>
    <property type="evidence" value="ECO:0007669"/>
    <property type="project" value="UniProtKB-KW"/>
</dbReference>
<dbReference type="GO" id="GO:0046872">
    <property type="term" value="F:metal ion binding"/>
    <property type="evidence" value="ECO:0007669"/>
    <property type="project" value="UniProtKB-KW"/>
</dbReference>
<dbReference type="GO" id="GO:0016163">
    <property type="term" value="F:nitrogenase activity"/>
    <property type="evidence" value="ECO:0007669"/>
    <property type="project" value="UniProtKB-EC"/>
</dbReference>
<dbReference type="GO" id="GO:0009399">
    <property type="term" value="P:nitrogen fixation"/>
    <property type="evidence" value="ECO:0007669"/>
    <property type="project" value="UniProtKB-KW"/>
</dbReference>
<dbReference type="Gene3D" id="3.40.50.12380">
    <property type="entry name" value="Nitrogenase MoFe cofactor biosynthesis protein NifE, C-terminal"/>
    <property type="match status" value="1"/>
</dbReference>
<dbReference type="Gene3D" id="3.40.50.1980">
    <property type="entry name" value="Nitrogenase molybdenum iron protein domain"/>
    <property type="match status" value="1"/>
</dbReference>
<dbReference type="InterPro" id="IPR000510">
    <property type="entry name" value="Nase/OxRdtase_comp1"/>
</dbReference>
<dbReference type="InterPro" id="IPR005974">
    <property type="entry name" value="Nase_asu"/>
</dbReference>
<dbReference type="InterPro" id="IPR010143">
    <property type="entry name" value="Nase_comp1_asu"/>
</dbReference>
<dbReference type="InterPro" id="IPR000318">
    <property type="entry name" value="Nase_comp1_CS"/>
</dbReference>
<dbReference type="NCBIfam" id="TIGR01284">
    <property type="entry name" value="alt_nitrog_alph"/>
    <property type="match status" value="1"/>
</dbReference>
<dbReference type="PANTHER" id="PTHR43457">
    <property type="entry name" value="NITROGENASE MOLYBDENUM-IRON PROTEIN ALPHA CHAIN"/>
    <property type="match status" value="1"/>
</dbReference>
<dbReference type="PANTHER" id="PTHR43457:SF1">
    <property type="entry name" value="NITROGENASE MOLYBDENUM-IRON PROTEIN ALPHA CHAIN"/>
    <property type="match status" value="1"/>
</dbReference>
<dbReference type="Pfam" id="PF00148">
    <property type="entry name" value="Oxidored_nitro"/>
    <property type="match status" value="1"/>
</dbReference>
<dbReference type="SUPFAM" id="SSF53807">
    <property type="entry name" value="Helical backbone' metal receptor"/>
    <property type="match status" value="1"/>
</dbReference>
<dbReference type="PROSITE" id="PS00699">
    <property type="entry name" value="NITROGENASE_1_1"/>
    <property type="match status" value="1"/>
</dbReference>
<dbReference type="PROSITE" id="PS00090">
    <property type="entry name" value="NITROGENASE_1_2"/>
    <property type="match status" value="1"/>
</dbReference>
<reference key="1">
    <citation type="journal article" date="1999" name="Can. J. Microbiol.">
        <title>Identification of genes unique to Mo-independent nitrogenase systems in diverse diazotrophs.</title>
        <authorList>
            <person name="Loveless T.M."/>
            <person name="Bishop P.E."/>
        </authorList>
    </citation>
    <scope>NUCLEOTIDE SEQUENCE [GENOMIC DNA]</scope>
</reference>
<accession>O68953</accession>
<gene>
    <name type="primary">vnfD</name>
</gene>
<keyword id="KW-0067">ATP-binding</keyword>
<keyword id="KW-0408">Iron</keyword>
<keyword id="KW-0411">Iron-sulfur</keyword>
<keyword id="KW-0479">Metal-binding</keyword>
<keyword id="KW-0535">Nitrogen fixation</keyword>
<keyword id="KW-0547">Nucleotide-binding</keyword>
<keyword id="KW-0560">Oxidoreductase</keyword>
<keyword id="KW-0837">Vanadium</keyword>
<name>VNFD_AZOPA</name>
<protein>
    <recommendedName>
        <fullName>Nitrogenase vanadium-iron protein alpha chain</fullName>
        <ecNumber>1.18.6.1</ecNumber>
    </recommendedName>
    <alternativeName>
        <fullName>Dinitrogenase 2 subunit alpha</fullName>
    </alternativeName>
    <alternativeName>
        <fullName>Nitrogenase component I</fullName>
    </alternativeName>
</protein>
<organism>
    <name type="scientific">Azorhizophilus paspali</name>
    <name type="common">Azotobacter paspali</name>
    <dbReference type="NCBI Taxonomy" id="69963"/>
    <lineage>
        <taxon>Bacteria</taxon>
        <taxon>Pseudomonadati</taxon>
        <taxon>Pseudomonadota</taxon>
        <taxon>Gammaproteobacteria</taxon>
        <taxon>Pseudomonadales</taxon>
        <taxon>Pseudomonadaceae</taxon>
        <taxon>Azorhizophilus</taxon>
    </lineage>
</organism>
<feature type="chain" id="PRO_0000153056" description="Nitrogenase vanadium-iron protein alpha chain">
    <location>
        <begin position="1" status="less than"/>
        <end position="265" status="greater than"/>
    </location>
</feature>
<feature type="binding site" evidence="1">
    <location>
        <position position="17"/>
    </location>
    <ligand>
        <name>[8Fe-7S] cluster</name>
        <dbReference type="ChEBI" id="CHEBI:21143"/>
        <note>ligand shared with beta chain</note>
    </ligand>
</feature>
<feature type="binding site" evidence="1">
    <location>
        <position position="80"/>
    </location>
    <ligand>
        <name>[8Fe-7S] cluster</name>
        <dbReference type="ChEBI" id="CHEBI:21143"/>
        <note>ligand shared with beta chain</note>
    </ligand>
</feature>
<feature type="binding site" evidence="1">
    <location>
        <position position="199"/>
    </location>
    <ligand>
        <name>[7Fe-V-9S-C-homocitryl] cluster</name>
        <dbReference type="ChEBI" id="CHEBI:60357"/>
    </ligand>
</feature>
<feature type="non-terminal residue">
    <location>
        <position position="1"/>
    </location>
</feature>
<feature type="non-terminal residue">
    <location>
        <position position="265"/>
    </location>
</feature>
<evidence type="ECO:0000250" key="1"/>
<evidence type="ECO:0000305" key="2"/>
<proteinExistence type="inferred from homology"/>